<sequence length="204" mass="21016">MALVTKLLVASRNRKKLAELRRVLDGAGLSGLTLLSLGDVSPLPETPETGVTFEDNALAKARDAFSATGLASVADDSGLEVAALGGMPGVLSARWSGRYGDDAANTALLLAQLCDVPDERRGAAFVSACALVSGSGEVVVRGEWPGTIAREPRGDGGFGYDPVFVPYGDDRTAAQLSPAEKDAVSHRGRALALLLPALRSLATG</sequence>
<reference key="1">
    <citation type="journal article" date="2003" name="Proc. Natl. Acad. Sci. U.S.A.">
        <title>The complete genome sequence of Mycobacterium bovis.</title>
        <authorList>
            <person name="Garnier T."/>
            <person name="Eiglmeier K."/>
            <person name="Camus J.-C."/>
            <person name="Medina N."/>
            <person name="Mansoor H."/>
            <person name="Pryor M."/>
            <person name="Duthoy S."/>
            <person name="Grondin S."/>
            <person name="Lacroix C."/>
            <person name="Monsempe C."/>
            <person name="Simon S."/>
            <person name="Harris B."/>
            <person name="Atkin R."/>
            <person name="Doggett J."/>
            <person name="Mayes R."/>
            <person name="Keating L."/>
            <person name="Wheeler P.R."/>
            <person name="Parkhill J."/>
            <person name="Barrell B.G."/>
            <person name="Cole S.T."/>
            <person name="Gordon S.V."/>
            <person name="Hewinson R.G."/>
        </authorList>
    </citation>
    <scope>NUCLEOTIDE SEQUENCE [LARGE SCALE GENOMIC DNA]</scope>
    <source>
        <strain>ATCC BAA-935 / AF2122/97</strain>
    </source>
</reference>
<reference key="2">
    <citation type="journal article" date="2017" name="Genome Announc.">
        <title>Updated reference genome sequence and annotation of Mycobacterium bovis AF2122/97.</title>
        <authorList>
            <person name="Malone K.M."/>
            <person name="Farrell D."/>
            <person name="Stuber T.P."/>
            <person name="Schubert O.T."/>
            <person name="Aebersold R."/>
            <person name="Robbe-Austerman S."/>
            <person name="Gordon S.V."/>
        </authorList>
    </citation>
    <scope>NUCLEOTIDE SEQUENCE [LARGE SCALE GENOMIC DNA]</scope>
    <scope>GENOME REANNOTATION</scope>
    <source>
        <strain>ATCC BAA-935 / AF2122/97</strain>
    </source>
</reference>
<evidence type="ECO:0000255" key="1">
    <source>
        <dbReference type="HAMAP-Rule" id="MF_01405"/>
    </source>
</evidence>
<comment type="function">
    <text evidence="1">Pyrophosphatase that catalyzes the hydrolysis of nucleoside triphosphates to their monophosphate derivatives, with a high preference for the non-canonical purine nucleotides XTP (xanthosine triphosphate), dITP (deoxyinosine triphosphate) and ITP. Seems to function as a house-cleaning enzyme that removes non-canonical purine nucleotides from the nucleotide pool, thus preventing their incorporation into DNA/RNA and avoiding chromosomal lesions.</text>
</comment>
<comment type="catalytic activity">
    <reaction evidence="1">
        <text>XTP + H2O = XMP + diphosphate + H(+)</text>
        <dbReference type="Rhea" id="RHEA:28610"/>
        <dbReference type="ChEBI" id="CHEBI:15377"/>
        <dbReference type="ChEBI" id="CHEBI:15378"/>
        <dbReference type="ChEBI" id="CHEBI:33019"/>
        <dbReference type="ChEBI" id="CHEBI:57464"/>
        <dbReference type="ChEBI" id="CHEBI:61314"/>
        <dbReference type="EC" id="3.6.1.66"/>
    </reaction>
</comment>
<comment type="catalytic activity">
    <reaction evidence="1">
        <text>dITP + H2O = dIMP + diphosphate + H(+)</text>
        <dbReference type="Rhea" id="RHEA:28342"/>
        <dbReference type="ChEBI" id="CHEBI:15377"/>
        <dbReference type="ChEBI" id="CHEBI:15378"/>
        <dbReference type="ChEBI" id="CHEBI:33019"/>
        <dbReference type="ChEBI" id="CHEBI:61194"/>
        <dbReference type="ChEBI" id="CHEBI:61382"/>
        <dbReference type="EC" id="3.6.1.66"/>
    </reaction>
</comment>
<comment type="catalytic activity">
    <reaction evidence="1">
        <text>ITP + H2O = IMP + diphosphate + H(+)</text>
        <dbReference type="Rhea" id="RHEA:29399"/>
        <dbReference type="ChEBI" id="CHEBI:15377"/>
        <dbReference type="ChEBI" id="CHEBI:15378"/>
        <dbReference type="ChEBI" id="CHEBI:33019"/>
        <dbReference type="ChEBI" id="CHEBI:58053"/>
        <dbReference type="ChEBI" id="CHEBI:61402"/>
        <dbReference type="EC" id="3.6.1.66"/>
    </reaction>
</comment>
<comment type="cofactor">
    <cofactor evidence="1">
        <name>Mg(2+)</name>
        <dbReference type="ChEBI" id="CHEBI:18420"/>
    </cofactor>
    <text evidence="1">Binds 1 Mg(2+) ion per subunit.</text>
</comment>
<comment type="subunit">
    <text evidence="1">Homodimer.</text>
</comment>
<comment type="similarity">
    <text evidence="1">Belongs to the HAM1 NTPase family.</text>
</comment>
<accession>P64308</accession>
<accession>A0A1R3XY20</accession>
<accession>Q10649</accession>
<accession>X2BHU2</accession>
<dbReference type="EC" id="3.6.1.66" evidence="1"/>
<dbReference type="EMBL" id="LT708304">
    <property type="protein sequence ID" value="SIT99979.1"/>
    <property type="molecule type" value="Genomic_DNA"/>
</dbReference>
<dbReference type="RefSeq" id="NP_855030.1">
    <property type="nucleotide sequence ID" value="NC_002945.3"/>
</dbReference>
<dbReference type="SMR" id="P64308"/>
<dbReference type="KEGG" id="mbo:BQ2027_MB1376"/>
<dbReference type="PATRIC" id="fig|233413.5.peg.1508"/>
<dbReference type="Proteomes" id="UP000001419">
    <property type="component" value="Chromosome"/>
</dbReference>
<dbReference type="GO" id="GO:0005829">
    <property type="term" value="C:cytosol"/>
    <property type="evidence" value="ECO:0007669"/>
    <property type="project" value="TreeGrafter"/>
</dbReference>
<dbReference type="GO" id="GO:0035870">
    <property type="term" value="F:dITP diphosphatase activity"/>
    <property type="evidence" value="ECO:0007669"/>
    <property type="project" value="RHEA"/>
</dbReference>
<dbReference type="GO" id="GO:0036220">
    <property type="term" value="F:ITP diphosphatase activity"/>
    <property type="evidence" value="ECO:0007669"/>
    <property type="project" value="UniProtKB-EC"/>
</dbReference>
<dbReference type="GO" id="GO:0046872">
    <property type="term" value="F:metal ion binding"/>
    <property type="evidence" value="ECO:0007669"/>
    <property type="project" value="UniProtKB-KW"/>
</dbReference>
<dbReference type="GO" id="GO:0000166">
    <property type="term" value="F:nucleotide binding"/>
    <property type="evidence" value="ECO:0007669"/>
    <property type="project" value="UniProtKB-KW"/>
</dbReference>
<dbReference type="GO" id="GO:0017111">
    <property type="term" value="F:ribonucleoside triphosphate phosphatase activity"/>
    <property type="evidence" value="ECO:0007669"/>
    <property type="project" value="InterPro"/>
</dbReference>
<dbReference type="GO" id="GO:0036222">
    <property type="term" value="F:XTP diphosphatase activity"/>
    <property type="evidence" value="ECO:0007669"/>
    <property type="project" value="RHEA"/>
</dbReference>
<dbReference type="GO" id="GO:0009117">
    <property type="term" value="P:nucleotide metabolic process"/>
    <property type="evidence" value="ECO:0007669"/>
    <property type="project" value="UniProtKB-KW"/>
</dbReference>
<dbReference type="GO" id="GO:0009146">
    <property type="term" value="P:purine nucleoside triphosphate catabolic process"/>
    <property type="evidence" value="ECO:0007669"/>
    <property type="project" value="UniProtKB-UniRule"/>
</dbReference>
<dbReference type="CDD" id="cd00515">
    <property type="entry name" value="HAM1"/>
    <property type="match status" value="1"/>
</dbReference>
<dbReference type="FunFam" id="3.90.950.10:FF:000001">
    <property type="entry name" value="dITP/XTP pyrophosphatase"/>
    <property type="match status" value="1"/>
</dbReference>
<dbReference type="Gene3D" id="3.90.950.10">
    <property type="match status" value="1"/>
</dbReference>
<dbReference type="HAMAP" id="MF_01405">
    <property type="entry name" value="Non_canon_purine_NTPase"/>
    <property type="match status" value="1"/>
</dbReference>
<dbReference type="InterPro" id="IPR020922">
    <property type="entry name" value="dITP/XTP_pyrophosphatase"/>
</dbReference>
<dbReference type="InterPro" id="IPR029001">
    <property type="entry name" value="ITPase-like_fam"/>
</dbReference>
<dbReference type="InterPro" id="IPR002637">
    <property type="entry name" value="RdgB/HAM1"/>
</dbReference>
<dbReference type="NCBIfam" id="TIGR00042">
    <property type="entry name" value="RdgB/HAM1 family non-canonical purine NTP pyrophosphatase"/>
    <property type="match status" value="1"/>
</dbReference>
<dbReference type="PANTHER" id="PTHR11067:SF9">
    <property type="entry name" value="INOSINE TRIPHOSPHATE PYROPHOSPHATASE"/>
    <property type="match status" value="1"/>
</dbReference>
<dbReference type="PANTHER" id="PTHR11067">
    <property type="entry name" value="INOSINE TRIPHOSPHATE PYROPHOSPHATASE/HAM1 PROTEIN"/>
    <property type="match status" value="1"/>
</dbReference>
<dbReference type="Pfam" id="PF01725">
    <property type="entry name" value="Ham1p_like"/>
    <property type="match status" value="1"/>
</dbReference>
<dbReference type="SUPFAM" id="SSF52972">
    <property type="entry name" value="ITPase-like"/>
    <property type="match status" value="1"/>
</dbReference>
<name>IXTPA_MYCBO</name>
<proteinExistence type="inferred from homology"/>
<feature type="chain" id="PRO_0000178198" description="dITP/XTP pyrophosphatase">
    <location>
        <begin position="1"/>
        <end position="204"/>
    </location>
</feature>
<feature type="active site" description="Proton acceptor" evidence="1">
    <location>
        <position position="76"/>
    </location>
</feature>
<feature type="binding site" evidence="1">
    <location>
        <begin position="11"/>
        <end position="16"/>
    </location>
    <ligand>
        <name>substrate</name>
    </ligand>
</feature>
<feature type="binding site" evidence="1">
    <location>
        <position position="76"/>
    </location>
    <ligand>
        <name>Mg(2+)</name>
        <dbReference type="ChEBI" id="CHEBI:18420"/>
    </ligand>
</feature>
<feature type="binding site" evidence="1">
    <location>
        <position position="77"/>
    </location>
    <ligand>
        <name>substrate</name>
    </ligand>
</feature>
<feature type="binding site" evidence="1">
    <location>
        <begin position="158"/>
        <end position="161"/>
    </location>
    <ligand>
        <name>substrate</name>
    </ligand>
</feature>
<feature type="binding site" evidence="1">
    <location>
        <position position="181"/>
    </location>
    <ligand>
        <name>substrate</name>
    </ligand>
</feature>
<feature type="binding site" evidence="1">
    <location>
        <begin position="186"/>
        <end position="187"/>
    </location>
    <ligand>
        <name>substrate</name>
    </ligand>
</feature>
<keyword id="KW-0378">Hydrolase</keyword>
<keyword id="KW-0460">Magnesium</keyword>
<keyword id="KW-0479">Metal-binding</keyword>
<keyword id="KW-0546">Nucleotide metabolism</keyword>
<keyword id="KW-0547">Nucleotide-binding</keyword>
<keyword id="KW-1185">Reference proteome</keyword>
<protein>
    <recommendedName>
        <fullName evidence="1">dITP/XTP pyrophosphatase</fullName>
        <ecNumber evidence="1">3.6.1.66</ecNumber>
    </recommendedName>
    <alternativeName>
        <fullName evidence="1">Non-canonical purine NTP pyrophosphatase</fullName>
    </alternativeName>
    <alternativeName>
        <fullName evidence="1">Non-standard purine NTP pyrophosphatase</fullName>
    </alternativeName>
    <alternativeName>
        <fullName evidence="1">Nucleoside-triphosphate diphosphatase</fullName>
    </alternativeName>
    <alternativeName>
        <fullName evidence="1">Nucleoside-triphosphate pyrophosphatase</fullName>
        <shortName evidence="1">NTPase</shortName>
    </alternativeName>
</protein>
<gene>
    <name type="ordered locus">BQ2027_MB1376</name>
</gene>
<organism>
    <name type="scientific">Mycobacterium bovis (strain ATCC BAA-935 / AF2122/97)</name>
    <dbReference type="NCBI Taxonomy" id="233413"/>
    <lineage>
        <taxon>Bacteria</taxon>
        <taxon>Bacillati</taxon>
        <taxon>Actinomycetota</taxon>
        <taxon>Actinomycetes</taxon>
        <taxon>Mycobacteriales</taxon>
        <taxon>Mycobacteriaceae</taxon>
        <taxon>Mycobacterium</taxon>
        <taxon>Mycobacterium tuberculosis complex</taxon>
    </lineage>
</organism>